<sequence length="236" mass="26507">MKYKLLPCLLAIFLTGCDRTEVTLSFTPEMASFSNEFDFDPLRGPVKDFTQTLMDEQGEVTKRVSGTLSEEGCFDSLELLDLENNTVVALVLDANYYRDAETLEKRVRLQGKCQLAELPSAGVSWETDDNGFVIKASSKQMQMEYRYDDQGYPLGKTTKSNDKTLSVSATPSTDPIKKLDYTAVTLLNNQRVGNVKQSCEYDSHANPVDCQLIIVDEGVKPAVERVYTIKNTIDYY</sequence>
<name>YNFC_SHIFL</name>
<comment type="subcellular location">
    <subcellularLocation>
        <location evidence="2">Cell membrane</location>
        <topology evidence="2">Lipid-anchor</topology>
    </subcellularLocation>
</comment>
<comment type="similarity">
    <text evidence="2">Belongs to the UPF0257 family.</text>
</comment>
<comment type="sequence caution" evidence="2">
    <conflict type="erroneous initiation">
        <sequence resource="EMBL-CDS" id="AAN43180"/>
    </conflict>
    <text>Extended N-terminus.</text>
</comment>
<comment type="sequence caution" evidence="2">
    <conflict type="erroneous initiation">
        <sequence resource="EMBL-CDS" id="AAP17072"/>
    </conflict>
    <text>Extended N-terminus.</text>
</comment>
<keyword id="KW-1003">Cell membrane</keyword>
<keyword id="KW-0449">Lipoprotein</keyword>
<keyword id="KW-0472">Membrane</keyword>
<keyword id="KW-0564">Palmitate</keyword>
<keyword id="KW-1185">Reference proteome</keyword>
<keyword id="KW-0732">Signal</keyword>
<proteinExistence type="inferred from homology"/>
<evidence type="ECO:0000255" key="1"/>
<evidence type="ECO:0000305" key="2"/>
<gene>
    <name type="primary">ynfC</name>
    <name type="ordered locus">SF1595</name>
    <name type="ordered locus">S1722</name>
</gene>
<accession>P67554</accession>
<accession>P76171</accession>
<reference key="1">
    <citation type="journal article" date="2002" name="Nucleic Acids Res.">
        <title>Genome sequence of Shigella flexneri 2a: insights into pathogenicity through comparison with genomes of Escherichia coli K12 and O157.</title>
        <authorList>
            <person name="Jin Q."/>
            <person name="Yuan Z."/>
            <person name="Xu J."/>
            <person name="Wang Y."/>
            <person name="Shen Y."/>
            <person name="Lu W."/>
            <person name="Wang J."/>
            <person name="Liu H."/>
            <person name="Yang J."/>
            <person name="Yang F."/>
            <person name="Zhang X."/>
            <person name="Zhang J."/>
            <person name="Yang G."/>
            <person name="Wu H."/>
            <person name="Qu D."/>
            <person name="Dong J."/>
            <person name="Sun L."/>
            <person name="Xue Y."/>
            <person name="Zhao A."/>
            <person name="Gao Y."/>
            <person name="Zhu J."/>
            <person name="Kan B."/>
            <person name="Ding K."/>
            <person name="Chen S."/>
            <person name="Cheng H."/>
            <person name="Yao Z."/>
            <person name="He B."/>
            <person name="Chen R."/>
            <person name="Ma D."/>
            <person name="Qiang B."/>
            <person name="Wen Y."/>
            <person name="Hou Y."/>
            <person name="Yu J."/>
        </authorList>
    </citation>
    <scope>NUCLEOTIDE SEQUENCE [LARGE SCALE GENOMIC DNA]</scope>
    <source>
        <strain>301 / Serotype 2a</strain>
    </source>
</reference>
<reference key="2">
    <citation type="journal article" date="2003" name="Infect. Immun.">
        <title>Complete genome sequence and comparative genomics of Shigella flexneri serotype 2a strain 2457T.</title>
        <authorList>
            <person name="Wei J."/>
            <person name="Goldberg M.B."/>
            <person name="Burland V."/>
            <person name="Venkatesan M.M."/>
            <person name="Deng W."/>
            <person name="Fournier G."/>
            <person name="Mayhew G.F."/>
            <person name="Plunkett G. III"/>
            <person name="Rose D.J."/>
            <person name="Darling A."/>
            <person name="Mau B."/>
            <person name="Perna N.T."/>
            <person name="Payne S.M."/>
            <person name="Runyen-Janecky L.J."/>
            <person name="Zhou S."/>
            <person name="Schwartz D.C."/>
            <person name="Blattner F.R."/>
        </authorList>
    </citation>
    <scope>NUCLEOTIDE SEQUENCE [LARGE SCALE GENOMIC DNA]</scope>
    <source>
        <strain>ATCC 700930 / 2457T / Serotype 2a</strain>
    </source>
</reference>
<protein>
    <recommendedName>
        <fullName>UPF0257 lipoprotein YnfC</fullName>
    </recommendedName>
</protein>
<dbReference type="EMBL" id="AE005674">
    <property type="protein sequence ID" value="AAN43180.2"/>
    <property type="status" value="ALT_INIT"/>
    <property type="molecule type" value="Genomic_DNA"/>
</dbReference>
<dbReference type="EMBL" id="AE014073">
    <property type="protein sequence ID" value="AAP17072.1"/>
    <property type="status" value="ALT_INIT"/>
    <property type="molecule type" value="Genomic_DNA"/>
</dbReference>
<dbReference type="RefSeq" id="NP_707473.4">
    <property type="nucleotide sequence ID" value="NC_004337.2"/>
</dbReference>
<dbReference type="RefSeq" id="WP_001321287.1">
    <property type="nucleotide sequence ID" value="NZ_WPGW01000117.1"/>
</dbReference>
<dbReference type="SMR" id="P67554"/>
<dbReference type="PaxDb" id="198214-SF1595"/>
<dbReference type="GeneID" id="1024794"/>
<dbReference type="KEGG" id="sfl:SF1595"/>
<dbReference type="KEGG" id="sfx:S1722"/>
<dbReference type="PATRIC" id="fig|198214.7.peg.1887"/>
<dbReference type="HOGENOM" id="CLU_1174761_0_0_6"/>
<dbReference type="Proteomes" id="UP000001006">
    <property type="component" value="Chromosome"/>
</dbReference>
<dbReference type="Proteomes" id="UP000002673">
    <property type="component" value="Chromosome"/>
</dbReference>
<dbReference type="GO" id="GO:0005886">
    <property type="term" value="C:plasma membrane"/>
    <property type="evidence" value="ECO:0007669"/>
    <property type="project" value="UniProtKB-SubCell"/>
</dbReference>
<dbReference type="HAMAP" id="MF_01065">
    <property type="entry name" value="UPF0257"/>
    <property type="match status" value="1"/>
</dbReference>
<dbReference type="InterPro" id="IPR010646">
    <property type="entry name" value="UPF0257"/>
</dbReference>
<dbReference type="NCBIfam" id="NF002798">
    <property type="entry name" value="PRK02939.1"/>
    <property type="match status" value="1"/>
</dbReference>
<dbReference type="Pfam" id="PF06788">
    <property type="entry name" value="UPF0257"/>
    <property type="match status" value="1"/>
</dbReference>
<dbReference type="PROSITE" id="PS51257">
    <property type="entry name" value="PROKAR_LIPOPROTEIN"/>
    <property type="match status" value="1"/>
</dbReference>
<feature type="signal peptide" evidence="1">
    <location>
        <begin position="1"/>
        <end position="16"/>
    </location>
</feature>
<feature type="chain" id="PRO_0000036266" description="UPF0257 lipoprotein YnfC">
    <location>
        <begin position="17"/>
        <end position="236"/>
    </location>
</feature>
<feature type="lipid moiety-binding region" description="N-palmitoyl cysteine" evidence="1">
    <location>
        <position position="17"/>
    </location>
</feature>
<feature type="lipid moiety-binding region" description="S-diacylglycerol cysteine" evidence="1">
    <location>
        <position position="17"/>
    </location>
</feature>
<organism>
    <name type="scientific">Shigella flexneri</name>
    <dbReference type="NCBI Taxonomy" id="623"/>
    <lineage>
        <taxon>Bacteria</taxon>
        <taxon>Pseudomonadati</taxon>
        <taxon>Pseudomonadota</taxon>
        <taxon>Gammaproteobacteria</taxon>
        <taxon>Enterobacterales</taxon>
        <taxon>Enterobacteriaceae</taxon>
        <taxon>Shigella</taxon>
    </lineage>
</organism>